<proteinExistence type="inferred from homology"/>
<sequence>MKTLKTLKIFIIVFIASVSLASFAGFGESCSSLPTTSDGYLETDTAYGYIIRNIDMKDPRGNCNSVASSITFCFKNVEGSSSPCTMYTLNEGDSKKISDLSTDNNPDLGANPVLKNIVLTVKKWDNDLCLVMPTSRGPMPVACKSLSATPTPPPSEDKNCNIGKSCYTGANYSQSLINFSGLAVQCLSETLNKIFFAGKSCSAQDQNSRITNLAAFSTFQGYLKRIIGAALILYTMFFAFNMALNTEYASTEKIALFVIKFLFVAYFSIGLGPLDFSGGQPTKENGMLKYGLPLLTGAAPDFAQMIFNAAGSRGLCQFDNSKYKDGYKFYGLWDAIDCRIGYYLGLDLLYNIDKNRVLGNVVGNGPRGNNTPIPNFDPEGKNDRPKDLSKAGALRFFTVMFGFFMAGNVIILAAGLVFSVIFLSILLYFITHYLVCMITIYVMTYISPIFIPMALFTRTKAYFDGWLKVCISCALQPAVVAGFIALLITMYDSAIFKNCEFLRYDYERGDIRFSTFELRLPVGGADKCQESFGYKMLEYYAGKGWEEHLLILFPIKSIVRDVVSILAELLCVLVFSVIFYYFSKSIGRFASDLTNGPNMDAVTASPTKIVGLVKKGAAFLKDAAMASQGKPLVGDKPGVGGKRKEGEQQGGDLASGSGGGK</sequence>
<keyword id="KW-1003">Cell membrane</keyword>
<keyword id="KW-0472">Membrane</keyword>
<keyword id="KW-0732">Signal</keyword>
<keyword id="KW-0812">Transmembrane</keyword>
<keyword id="KW-1133">Transmembrane helix</keyword>
<organism>
    <name type="scientific">Rickettsia conorii (strain ATCC VR-613 / Malish 7)</name>
    <dbReference type="NCBI Taxonomy" id="272944"/>
    <lineage>
        <taxon>Bacteria</taxon>
        <taxon>Pseudomonadati</taxon>
        <taxon>Pseudomonadota</taxon>
        <taxon>Alphaproteobacteria</taxon>
        <taxon>Rickettsiales</taxon>
        <taxon>Rickettsiaceae</taxon>
        <taxon>Rickettsieae</taxon>
        <taxon>Rickettsia</taxon>
        <taxon>spotted fever group</taxon>
    </lineage>
</organism>
<comment type="subcellular location">
    <subcellularLocation>
        <location evidence="3">Cell membrane</location>
        <topology evidence="3">Multi-pass membrane protein</topology>
    </subcellularLocation>
</comment>
<comment type="similarity">
    <text evidence="3">Belongs to the TrbL/VirB6 family.</text>
</comment>
<gene>
    <name type="ordered locus">RC0143</name>
</gene>
<feature type="signal peptide" evidence="1">
    <location>
        <begin position="1"/>
        <end position="24"/>
    </location>
</feature>
<feature type="chain" id="PRO_0000269208" description="Uncharacterized protein RC0143">
    <location>
        <begin position="25"/>
        <end position="661"/>
    </location>
</feature>
<feature type="transmembrane region" description="Helical" evidence="1">
    <location>
        <begin position="226"/>
        <end position="246"/>
    </location>
</feature>
<feature type="transmembrane region" description="Helical" evidence="1">
    <location>
        <begin position="254"/>
        <end position="274"/>
    </location>
</feature>
<feature type="transmembrane region" description="Helical" evidence="1">
    <location>
        <begin position="410"/>
        <end position="430"/>
    </location>
</feature>
<feature type="transmembrane region" description="Helical" evidence="1">
    <location>
        <begin position="436"/>
        <end position="456"/>
    </location>
</feature>
<feature type="transmembrane region" description="Helical" evidence="1">
    <location>
        <begin position="469"/>
        <end position="489"/>
    </location>
</feature>
<feature type="transmembrane region" description="Helical" evidence="1">
    <location>
        <begin position="562"/>
        <end position="582"/>
    </location>
</feature>
<feature type="region of interest" description="Disordered" evidence="2">
    <location>
        <begin position="629"/>
        <end position="661"/>
    </location>
</feature>
<protein>
    <recommendedName>
        <fullName>Uncharacterized protein RC0143</fullName>
    </recommendedName>
</protein>
<reference key="1">
    <citation type="journal article" date="2001" name="Science">
        <title>Mechanisms of evolution in Rickettsia conorii and R. prowazekii.</title>
        <authorList>
            <person name="Ogata H."/>
            <person name="Audic S."/>
            <person name="Renesto-Audiffren P."/>
            <person name="Fournier P.-E."/>
            <person name="Barbe V."/>
            <person name="Samson D."/>
            <person name="Roux V."/>
            <person name="Cossart P."/>
            <person name="Weissenbach J."/>
            <person name="Claverie J.-M."/>
            <person name="Raoult D."/>
        </authorList>
    </citation>
    <scope>NUCLEOTIDE SEQUENCE [LARGE SCALE GENOMIC DNA]</scope>
    <source>
        <strain>ATCC VR-613 / Malish 7</strain>
    </source>
</reference>
<evidence type="ECO:0000255" key="1"/>
<evidence type="ECO:0000256" key="2">
    <source>
        <dbReference type="SAM" id="MobiDB-lite"/>
    </source>
</evidence>
<evidence type="ECO:0000305" key="3"/>
<name>Y143_RICCN</name>
<dbReference type="EMBL" id="AE006914">
    <property type="protein sequence ID" value="AAL02681.1"/>
    <property type="molecule type" value="Genomic_DNA"/>
</dbReference>
<dbReference type="PIR" id="G97717">
    <property type="entry name" value="G97717"/>
</dbReference>
<dbReference type="RefSeq" id="WP_010976820.1">
    <property type="nucleotide sequence ID" value="NC_003103.1"/>
</dbReference>
<dbReference type="GeneID" id="928051"/>
<dbReference type="KEGG" id="rco:RC0143"/>
<dbReference type="PATRIC" id="fig|272944.4.peg.167"/>
<dbReference type="HOGENOM" id="CLU_027273_0_0_5"/>
<dbReference type="Proteomes" id="UP000000816">
    <property type="component" value="Chromosome"/>
</dbReference>
<dbReference type="GO" id="GO:0005886">
    <property type="term" value="C:plasma membrane"/>
    <property type="evidence" value="ECO:0007669"/>
    <property type="project" value="UniProtKB-SubCell"/>
</dbReference>
<dbReference type="GO" id="GO:0030255">
    <property type="term" value="P:protein secretion by the type IV secretion system"/>
    <property type="evidence" value="ECO:0007669"/>
    <property type="project" value="InterPro"/>
</dbReference>
<dbReference type="InterPro" id="IPR007688">
    <property type="entry name" value="Conjugal_tfr_TrbL/VirB6"/>
</dbReference>
<dbReference type="Pfam" id="PF04610">
    <property type="entry name" value="TrbL"/>
    <property type="match status" value="1"/>
</dbReference>
<accession>Q92JC4</accession>